<feature type="chain" id="PRO_0000126818" description="Phenylalanine--tRNA ligase alpha subunit">
    <location>
        <begin position="1"/>
        <end position="501"/>
    </location>
</feature>
<feature type="binding site" evidence="2 3">
    <location>
        <position position="344"/>
    </location>
    <ligand>
        <name>L-phenylalanine</name>
        <dbReference type="ChEBI" id="CHEBI:58095"/>
    </ligand>
</feature>
<feature type="binding site" evidence="2 3">
    <location>
        <begin position="383"/>
        <end position="385"/>
    </location>
    <ligand>
        <name>L-phenylalanine</name>
        <dbReference type="ChEBI" id="CHEBI:58095"/>
    </ligand>
</feature>
<feature type="binding site" evidence="2 3">
    <location>
        <position position="424"/>
    </location>
    <ligand>
        <name>L-phenylalanine</name>
        <dbReference type="ChEBI" id="CHEBI:58095"/>
    </ligand>
</feature>
<feature type="binding site" evidence="1 3">
    <location>
        <position position="426"/>
    </location>
    <ligand>
        <name>Mg(2+)</name>
        <dbReference type="ChEBI" id="CHEBI:18420"/>
        <note>shared with beta subunit</note>
    </ligand>
</feature>
<feature type="binding site" evidence="2 3">
    <location>
        <position position="449"/>
    </location>
    <ligand>
        <name>L-phenylalanine</name>
        <dbReference type="ChEBI" id="CHEBI:58095"/>
    </ligand>
</feature>
<accession>Q76KA8</accession>
<evidence type="ECO:0000250" key="1">
    <source>
        <dbReference type="UniProtKB" id="A5K9S0"/>
    </source>
</evidence>
<evidence type="ECO:0000250" key="2">
    <source>
        <dbReference type="UniProtKB" id="Q9Y285"/>
    </source>
</evidence>
<evidence type="ECO:0000255" key="3">
    <source>
        <dbReference type="HAMAP-Rule" id="MF_00282"/>
    </source>
</evidence>
<evidence type="ECO:0000305" key="4"/>
<reference key="1">
    <citation type="journal article" date="2003" name="J. Biochem.">
        <title>Genetic, enzymatic, and structural analyses of phenylalanyl-tRNA synthetase from Thermococcus kodakaraensis KOD1.</title>
        <authorList>
            <person name="Shiraki K."/>
            <person name="Tsuji M."/>
            <person name="Hashimoto Y."/>
            <person name="Fujimoto K."/>
            <person name="Fujiwara S."/>
            <person name="Takagi M."/>
            <person name="Imanaka T."/>
        </authorList>
    </citation>
    <scope>NUCLEOTIDE SEQUENCE [GENOMIC DNA]</scope>
    <scope>CHARACTERIZATION</scope>
    <source>
        <strain>ATCC BAA-918 / JCM 12380 / KOD1</strain>
    </source>
</reference>
<reference key="2">
    <citation type="journal article" date="2005" name="Genome Res.">
        <title>Complete genome sequence of the hyperthermophilic archaeon Thermococcus kodakaraensis KOD1 and comparison with Pyrococcus genomes.</title>
        <authorList>
            <person name="Fukui T."/>
            <person name="Atomi H."/>
            <person name="Kanai T."/>
            <person name="Matsumi R."/>
            <person name="Fujiwara S."/>
            <person name="Imanaka T."/>
        </authorList>
    </citation>
    <scope>NUCLEOTIDE SEQUENCE [LARGE SCALE GENOMIC DNA]</scope>
    <source>
        <strain>ATCC BAA-918 / JCM 12380 / KOD1</strain>
    </source>
</reference>
<dbReference type="EC" id="6.1.1.20" evidence="3"/>
<dbReference type="EMBL" id="AB093556">
    <property type="protein sequence ID" value="BAC99020.1"/>
    <property type="molecule type" value="Genomic_DNA"/>
</dbReference>
<dbReference type="EMBL" id="AP006878">
    <property type="protein sequence ID" value="BAD85110.1"/>
    <property type="molecule type" value="Genomic_DNA"/>
</dbReference>
<dbReference type="RefSeq" id="WP_011249872.1">
    <property type="nucleotide sequence ID" value="NC_006624.1"/>
</dbReference>
<dbReference type="SMR" id="Q76KA8"/>
<dbReference type="FunCoup" id="Q76KA8">
    <property type="interactions" value="234"/>
</dbReference>
<dbReference type="STRING" id="69014.TK0921"/>
<dbReference type="EnsemblBacteria" id="BAD85110">
    <property type="protein sequence ID" value="BAD85110"/>
    <property type="gene ID" value="TK0921"/>
</dbReference>
<dbReference type="GeneID" id="78447435"/>
<dbReference type="KEGG" id="tko:TK0921"/>
<dbReference type="PATRIC" id="fig|69014.16.peg.899"/>
<dbReference type="eggNOG" id="arCOG00410">
    <property type="taxonomic scope" value="Archaea"/>
</dbReference>
<dbReference type="HOGENOM" id="CLU_025086_2_2_2"/>
<dbReference type="InParanoid" id="Q76KA8"/>
<dbReference type="OrthoDB" id="372178at2157"/>
<dbReference type="PhylomeDB" id="Q76KA8"/>
<dbReference type="BRENDA" id="6.1.1.20">
    <property type="organism ID" value="5246"/>
</dbReference>
<dbReference type="Proteomes" id="UP000000536">
    <property type="component" value="Chromosome"/>
</dbReference>
<dbReference type="GO" id="GO:0005737">
    <property type="term" value="C:cytoplasm"/>
    <property type="evidence" value="ECO:0000318"/>
    <property type="project" value="GO_Central"/>
</dbReference>
<dbReference type="GO" id="GO:0005524">
    <property type="term" value="F:ATP binding"/>
    <property type="evidence" value="ECO:0007669"/>
    <property type="project" value="UniProtKB-UniRule"/>
</dbReference>
<dbReference type="GO" id="GO:0000287">
    <property type="term" value="F:magnesium ion binding"/>
    <property type="evidence" value="ECO:0007669"/>
    <property type="project" value="UniProtKB-UniRule"/>
</dbReference>
<dbReference type="GO" id="GO:0004826">
    <property type="term" value="F:phenylalanine-tRNA ligase activity"/>
    <property type="evidence" value="ECO:0000318"/>
    <property type="project" value="GO_Central"/>
</dbReference>
<dbReference type="GO" id="GO:0000049">
    <property type="term" value="F:tRNA binding"/>
    <property type="evidence" value="ECO:0007669"/>
    <property type="project" value="InterPro"/>
</dbReference>
<dbReference type="GO" id="GO:0006432">
    <property type="term" value="P:phenylalanyl-tRNA aminoacylation"/>
    <property type="evidence" value="ECO:0000318"/>
    <property type="project" value="GO_Central"/>
</dbReference>
<dbReference type="CDD" id="cd00496">
    <property type="entry name" value="PheRS_alpha_core"/>
    <property type="match status" value="1"/>
</dbReference>
<dbReference type="FunFam" id="3.30.930.10:FF:000095">
    <property type="entry name" value="Phenylalanine--tRNA ligase alpha subunit"/>
    <property type="match status" value="1"/>
</dbReference>
<dbReference type="Gene3D" id="1.10.10.2320">
    <property type="match status" value="1"/>
</dbReference>
<dbReference type="Gene3D" id="1.10.10.2330">
    <property type="match status" value="1"/>
</dbReference>
<dbReference type="Gene3D" id="3.30.1370.240">
    <property type="match status" value="1"/>
</dbReference>
<dbReference type="Gene3D" id="3.30.930.10">
    <property type="entry name" value="Bira Bifunctional Protein, Domain 2"/>
    <property type="match status" value="1"/>
</dbReference>
<dbReference type="HAMAP" id="MF_00282">
    <property type="entry name" value="Phe_tRNA_synth_alpha2"/>
    <property type="match status" value="1"/>
</dbReference>
<dbReference type="InterPro" id="IPR006195">
    <property type="entry name" value="aa-tRNA-synth_II"/>
</dbReference>
<dbReference type="InterPro" id="IPR045864">
    <property type="entry name" value="aa-tRNA-synth_II/BPL/LPL"/>
</dbReference>
<dbReference type="InterPro" id="IPR004529">
    <property type="entry name" value="Phe-tRNA-synth_IIc_asu"/>
</dbReference>
<dbReference type="InterPro" id="IPR022917">
    <property type="entry name" value="Phe_tRNA_ligase_alpha_bac/arc"/>
</dbReference>
<dbReference type="InterPro" id="IPR002319">
    <property type="entry name" value="Phenylalanyl-tRNA_Synthase"/>
</dbReference>
<dbReference type="InterPro" id="IPR036390">
    <property type="entry name" value="WH_DNA-bd_sf"/>
</dbReference>
<dbReference type="NCBIfam" id="TIGR00468">
    <property type="entry name" value="pheS"/>
    <property type="match status" value="1"/>
</dbReference>
<dbReference type="NCBIfam" id="NF003210">
    <property type="entry name" value="PRK04172.1"/>
    <property type="match status" value="1"/>
</dbReference>
<dbReference type="PANTHER" id="PTHR11538:SF40">
    <property type="entry name" value="PHENYLALANINE--TRNA LIGASE ALPHA SUBUNIT"/>
    <property type="match status" value="1"/>
</dbReference>
<dbReference type="PANTHER" id="PTHR11538">
    <property type="entry name" value="PHENYLALANYL-TRNA SYNTHETASE"/>
    <property type="match status" value="1"/>
</dbReference>
<dbReference type="Pfam" id="PF01409">
    <property type="entry name" value="tRNA-synt_2d"/>
    <property type="match status" value="1"/>
</dbReference>
<dbReference type="SUPFAM" id="SSF55681">
    <property type="entry name" value="Class II aaRS and biotin synthetases"/>
    <property type="match status" value="1"/>
</dbReference>
<dbReference type="SUPFAM" id="SSF46785">
    <property type="entry name" value="Winged helix' DNA-binding domain"/>
    <property type="match status" value="1"/>
</dbReference>
<dbReference type="PROSITE" id="PS50862">
    <property type="entry name" value="AA_TRNA_LIGASE_II"/>
    <property type="match status" value="1"/>
</dbReference>
<protein>
    <recommendedName>
        <fullName evidence="3">Phenylalanine--tRNA ligase alpha subunit</fullName>
        <ecNumber evidence="3">6.1.1.20</ecNumber>
    </recommendedName>
    <alternativeName>
        <fullName evidence="3">Phenylalanyl-tRNA synthetase alpha subunit</fullName>
        <shortName evidence="3">PheRS</shortName>
    </alternativeName>
    <alternativeName>
        <fullName>Tk-pheRSA</fullName>
    </alternativeName>
</protein>
<sequence length="501" mass="57603">MELSYPEKLTLIKLAELKRAKVEELVKESGLEQVAVMRALLGLQAKGLAKLHERSERVVKLTETGMKYAQIGLPEWRALKVLREKGKATLDDLKDVLSEDELKPIVGLLRREGWANVRKEDGKLVLEITEKGREASERPIDKALKLLAERGEVPVKEIEKLVPVNELKRRKIGEEDVITERVAEITEKGEELVKKGLELKKEVSVLTPELIKSGKWREVEFRKFDIKAPVRRIYPGKKQPYRAFLDKIRRRLIEMGFIEMTVDSLIETQFWNFDALFQPQNHPAREWTDTYQLKYPKVGSLPDEELVARVKAAHEHGGDTGSRGWGYVWSPERAMLLMPRAHGTALDARQLAKGVEIPGKYFTIQRVFRPDVLDRTHLIEFNQIDGFVVGEDLNFRHLLGILKRFAVEIAGAKKVKFLPDYYPFTEPSVQMSAYHPELGWVEFGGAGIFREEMTKALGIDVPVIAWGIGIDRLAMFKLGIDDIRYLFSYDLRWLREARLVW</sequence>
<organism>
    <name type="scientific">Thermococcus kodakarensis (strain ATCC BAA-918 / JCM 12380 / KOD1)</name>
    <name type="common">Pyrococcus kodakaraensis (strain KOD1)</name>
    <dbReference type="NCBI Taxonomy" id="69014"/>
    <lineage>
        <taxon>Archaea</taxon>
        <taxon>Methanobacteriati</taxon>
        <taxon>Methanobacteriota</taxon>
        <taxon>Thermococci</taxon>
        <taxon>Thermococcales</taxon>
        <taxon>Thermococcaceae</taxon>
        <taxon>Thermococcus</taxon>
    </lineage>
</organism>
<gene>
    <name evidence="3" type="primary">pheS</name>
    <name type="ordered locus">TK0921</name>
</gene>
<comment type="catalytic activity">
    <reaction evidence="3">
        <text>tRNA(Phe) + L-phenylalanine + ATP = L-phenylalanyl-tRNA(Phe) + AMP + diphosphate + H(+)</text>
        <dbReference type="Rhea" id="RHEA:19413"/>
        <dbReference type="Rhea" id="RHEA-COMP:9668"/>
        <dbReference type="Rhea" id="RHEA-COMP:9699"/>
        <dbReference type="ChEBI" id="CHEBI:15378"/>
        <dbReference type="ChEBI" id="CHEBI:30616"/>
        <dbReference type="ChEBI" id="CHEBI:33019"/>
        <dbReference type="ChEBI" id="CHEBI:58095"/>
        <dbReference type="ChEBI" id="CHEBI:78442"/>
        <dbReference type="ChEBI" id="CHEBI:78531"/>
        <dbReference type="ChEBI" id="CHEBI:456215"/>
        <dbReference type="EC" id="6.1.1.20"/>
    </reaction>
</comment>
<comment type="cofactor">
    <cofactor evidence="1 3">
        <name>Mg(2+)</name>
        <dbReference type="ChEBI" id="CHEBI:18420"/>
    </cofactor>
    <text evidence="3">Binds 2 magnesium ions per tetramer.</text>
</comment>
<comment type="biophysicochemical properties">
    <temperatureDependence>
        <text>Optimum temperature is 95 degrees Celsius.</text>
    </temperatureDependence>
</comment>
<comment type="subunit">
    <text evidence="3">Tetramer of two alpha and two beta subunits.</text>
</comment>
<comment type="subcellular location">
    <subcellularLocation>
        <location evidence="3">Cytoplasm</location>
    </subcellularLocation>
</comment>
<comment type="similarity">
    <text evidence="3 4">Belongs to the class-II aminoacyl-tRNA synthetase family. Phe-tRNA synthetase alpha subunit type 2 subfamily.</text>
</comment>
<proteinExistence type="evidence at protein level"/>
<name>SYFA_THEKO</name>
<keyword id="KW-0030">Aminoacyl-tRNA synthetase</keyword>
<keyword id="KW-0067">ATP-binding</keyword>
<keyword id="KW-0963">Cytoplasm</keyword>
<keyword id="KW-0436">Ligase</keyword>
<keyword id="KW-0460">Magnesium</keyword>
<keyword id="KW-0479">Metal-binding</keyword>
<keyword id="KW-0547">Nucleotide-binding</keyword>
<keyword id="KW-0648">Protein biosynthesis</keyword>
<keyword id="KW-1185">Reference proteome</keyword>